<proteinExistence type="evidence at protein level"/>
<organism>
    <name type="scientific">Arabidopsis thaliana</name>
    <name type="common">Mouse-ear cress</name>
    <dbReference type="NCBI Taxonomy" id="3702"/>
    <lineage>
        <taxon>Eukaryota</taxon>
        <taxon>Viridiplantae</taxon>
        <taxon>Streptophyta</taxon>
        <taxon>Embryophyta</taxon>
        <taxon>Tracheophyta</taxon>
        <taxon>Spermatophyta</taxon>
        <taxon>Magnoliopsida</taxon>
        <taxon>eudicotyledons</taxon>
        <taxon>Gunneridae</taxon>
        <taxon>Pentapetalae</taxon>
        <taxon>rosids</taxon>
        <taxon>malvids</taxon>
        <taxon>Brassicales</taxon>
        <taxon>Brassicaceae</taxon>
        <taxon>Camelineae</taxon>
        <taxon>Arabidopsis</taxon>
    </lineage>
</organism>
<protein>
    <recommendedName>
        <fullName>Methyl-CpG-binding domain-containing protein 2</fullName>
        <shortName>AtMBD2</shortName>
        <shortName>MBD02</shortName>
    </recommendedName>
    <alternativeName>
        <fullName>Methyl-CpG-binding protein MBD2</fullName>
    </alternativeName>
</protein>
<comment type="function">
    <text evidence="1">Probable transcriptional regulator.</text>
</comment>
<comment type="subunit">
    <text evidence="8">Interacts (via MBD domain) with DDM1.</text>
</comment>
<comment type="interaction">
    <interactant intactId="EBI-4425826">
        <id>Q8LA53</id>
    </interactant>
    <interactant intactId="EBI-15198431">
        <id>Q9CAV7</id>
        <label>At3g04930</label>
    </interactant>
    <organismsDiffer>false</organismsDiffer>
    <experiments>5</experiments>
</comment>
<comment type="interaction">
    <interactant intactId="EBI-4425826">
        <id>Q8LA53</id>
    </interactant>
    <interactant intactId="EBI-15191765">
        <id>O81793</id>
        <label>At4g35610</label>
    </interactant>
    <organismsDiffer>false</organismsDiffer>
    <experiments>5</experiments>
</comment>
<comment type="interaction">
    <interactant intactId="EBI-4425826">
        <id>Q8LA53</id>
    </interactant>
    <interactant intactId="EBI-15193831">
        <id>F4K5T4</id>
        <label>At5g28040</label>
    </interactant>
    <organismsDiffer>false</organismsDiffer>
    <experiments>3</experiments>
</comment>
<comment type="interaction">
    <interactant intactId="EBI-4425826">
        <id>Q8LA53</id>
    </interactant>
    <interactant intactId="EBI-15193277">
        <id>P46897</id>
        <label>ATHB-7</label>
    </interactant>
    <organismsDiffer>false</organismsDiffer>
    <experiments>3</experiments>
</comment>
<comment type="interaction">
    <interactant intactId="EBI-4425826">
        <id>Q8LA53</id>
    </interactant>
    <interactant intactId="EBI-4434261">
        <id>Q9LNJ5</id>
        <label>BHLH13</label>
    </interactant>
    <organismsDiffer>false</organismsDiffer>
    <experiments>3</experiments>
</comment>
<comment type="interaction">
    <interactant intactId="EBI-4425826">
        <id>Q8LA53</id>
    </interactant>
    <interactant intactId="EBI-4447483">
        <id>O81801</id>
        <label>DAZ3</label>
    </interactant>
    <organismsDiffer>false</organismsDiffer>
    <experiments>5</experiments>
</comment>
<comment type="interaction">
    <interactant intactId="EBI-4425826">
        <id>Q8LA53</id>
    </interactant>
    <interactant intactId="EBI-4457944">
        <id>Q04996</id>
        <label>HAT3.1</label>
    </interactant>
    <organismsDiffer>false</organismsDiffer>
    <experiments>4</experiments>
</comment>
<comment type="interaction">
    <interactant intactId="EBI-4425826">
        <id>Q8LA53</id>
    </interactant>
    <interactant intactId="EBI-3946434">
        <id>Q38828</id>
        <label>IAA10</label>
    </interactant>
    <organismsDiffer>false</organismsDiffer>
    <experiments>4</experiments>
</comment>
<comment type="subcellular location">
    <subcellularLocation>
        <location evidence="6 8">Nucleus</location>
    </subcellularLocation>
    <text>Not present in chromocenters and the nucleolus.</text>
</comment>
<comment type="tissue specificity">
    <text evidence="5 7">Expressed in buds, flowers, stems, siliques and mature seeds.</text>
</comment>
<comment type="domain">
    <text evidence="1">The methyl-CpG-binding domain (MBD) functions both in binding to methylated DNA and in protein interactions.</text>
</comment>
<comment type="sequence caution" evidence="9">
    <conflict type="erroneous gene model prediction">
        <sequence resource="EMBL-CDS" id="AAC13602"/>
    </conflict>
</comment>
<comment type="sequence caution" evidence="9">
    <conflict type="erroneous initiation">
        <sequence resource="EMBL-CDS" id="BAB11480"/>
    </conflict>
    <text>Truncated N-terminus.</text>
</comment>
<accession>Q8LA53</accession>
<accession>O65234</accession>
<accession>Q0WRD3</accession>
<accession>Q84TJ8</accession>
<accession>Q9FZP7</accession>
<feature type="chain" id="PRO_0000405278" description="Methyl-CpG-binding domain-containing protein 2">
    <location>
        <begin position="1"/>
        <end position="272"/>
    </location>
</feature>
<feature type="domain" description="MBD" evidence="2">
    <location>
        <begin position="118"/>
        <end position="192"/>
    </location>
</feature>
<feature type="zinc finger region" description="CW-type" evidence="3">
    <location>
        <begin position="53"/>
        <end position="112"/>
    </location>
</feature>
<feature type="region of interest" description="Disordered" evidence="4">
    <location>
        <begin position="1"/>
        <end position="24"/>
    </location>
</feature>
<feature type="region of interest" description="Disordered" evidence="4">
    <location>
        <begin position="236"/>
        <end position="272"/>
    </location>
</feature>
<feature type="short sequence motif" description="MBD-associated domain (MAD)">
    <location>
        <begin position="62"/>
        <end position="104"/>
    </location>
</feature>
<feature type="compositionally biased region" description="Polar residues" evidence="4">
    <location>
        <begin position="1"/>
        <end position="15"/>
    </location>
</feature>
<feature type="compositionally biased region" description="Polar residues" evidence="4">
    <location>
        <begin position="236"/>
        <end position="250"/>
    </location>
</feature>
<feature type="binding site" evidence="3">
    <location>
        <position position="63"/>
    </location>
    <ligand>
        <name>Zn(2+)</name>
        <dbReference type="ChEBI" id="CHEBI:29105"/>
    </ligand>
</feature>
<feature type="binding site" evidence="3">
    <location>
        <position position="66"/>
    </location>
    <ligand>
        <name>Zn(2+)</name>
        <dbReference type="ChEBI" id="CHEBI:29105"/>
    </ligand>
</feature>
<feature type="binding site" evidence="3">
    <location>
        <position position="92"/>
    </location>
    <ligand>
        <name>Zn(2+)</name>
        <dbReference type="ChEBI" id="CHEBI:29105"/>
    </ligand>
</feature>
<feature type="binding site" evidence="3">
    <location>
        <position position="104"/>
    </location>
    <ligand>
        <name>Zn(2+)</name>
        <dbReference type="ChEBI" id="CHEBI:29105"/>
    </ligand>
</feature>
<feature type="sequence conflict" description="In Ref. 6; AAO64137." evidence="9" ref="6">
    <original>T</original>
    <variation>K</variation>
    <location>
        <position position="257"/>
    </location>
</feature>
<sequence>MSMSQSRAVQRSSSPNEDRGENQLVVYDLKGNDDTEEEVLPVQSQPLSSRTQCPSIGAFTVQCASCFKWRLMPSMQKYEEIREQLLENPFFCDTAREWKPDISCDVPADIYQDGTRLWAIDKPNISRPPAGWQRLLRIRGEGGTRFADVYYVAPSGKKLRSTVEVQKYLNDNSEYIGEGVKLSQFSFQIPKPLQDDYVRKRPARLLDSIDNTNTPVAKEANPLAWISPDDHISLQLGTPTESGLNNSHYQPSKKKKTSTLSIFGSNDELADR</sequence>
<keyword id="KW-0238">DNA-binding</keyword>
<keyword id="KW-0479">Metal-binding</keyword>
<keyword id="KW-0539">Nucleus</keyword>
<keyword id="KW-1185">Reference proteome</keyword>
<keyword id="KW-0804">Transcription</keyword>
<keyword id="KW-0805">Transcription regulation</keyword>
<keyword id="KW-0862">Zinc</keyword>
<keyword id="KW-0863">Zinc-finger</keyword>
<evidence type="ECO:0000250" key="1"/>
<evidence type="ECO:0000255" key="2">
    <source>
        <dbReference type="PROSITE-ProRule" id="PRU00338"/>
    </source>
</evidence>
<evidence type="ECO:0000255" key="3">
    <source>
        <dbReference type="PROSITE-ProRule" id="PRU00454"/>
    </source>
</evidence>
<evidence type="ECO:0000256" key="4">
    <source>
        <dbReference type="SAM" id="MobiDB-lite"/>
    </source>
</evidence>
<evidence type="ECO:0000269" key="5">
    <source>
    </source>
</evidence>
<evidence type="ECO:0000269" key="6">
    <source>
    </source>
</evidence>
<evidence type="ECO:0000269" key="7">
    <source>
    </source>
</evidence>
<evidence type="ECO:0000269" key="8">
    <source>
    </source>
</evidence>
<evidence type="ECO:0000305" key="9"/>
<dbReference type="EMBL" id="AB025636">
    <property type="protein sequence ID" value="BAB11480.1"/>
    <property type="status" value="ALT_INIT"/>
    <property type="molecule type" value="Genomic_DNA"/>
</dbReference>
<dbReference type="EMBL" id="AF058826">
    <property type="protein sequence ID" value="AAC13602.1"/>
    <property type="status" value="ALT_SEQ"/>
    <property type="molecule type" value="Genomic_DNA"/>
</dbReference>
<dbReference type="EMBL" id="CP002688">
    <property type="protein sequence ID" value="AED93952.1"/>
    <property type="molecule type" value="Genomic_DNA"/>
</dbReference>
<dbReference type="EMBL" id="CP002688">
    <property type="protein sequence ID" value="AED93953.1"/>
    <property type="molecule type" value="Genomic_DNA"/>
</dbReference>
<dbReference type="EMBL" id="CP002688">
    <property type="protein sequence ID" value="AED93954.1"/>
    <property type="molecule type" value="Genomic_DNA"/>
</dbReference>
<dbReference type="EMBL" id="CP002688">
    <property type="protein sequence ID" value="ANM69459.1"/>
    <property type="molecule type" value="Genomic_DNA"/>
</dbReference>
<dbReference type="EMBL" id="AY088026">
    <property type="protein sequence ID" value="AAM65572.1"/>
    <property type="molecule type" value="mRNA"/>
</dbReference>
<dbReference type="EMBL" id="BT025800">
    <property type="protein sequence ID" value="ABF83690.1"/>
    <property type="molecule type" value="mRNA"/>
</dbReference>
<dbReference type="EMBL" id="BT005718">
    <property type="protein sequence ID" value="AAO64137.1"/>
    <property type="molecule type" value="mRNA"/>
</dbReference>
<dbReference type="EMBL" id="AK228378">
    <property type="protein sequence ID" value="BAF00316.1"/>
    <property type="molecule type" value="mRNA"/>
</dbReference>
<dbReference type="PIR" id="T01176">
    <property type="entry name" value="T01176"/>
</dbReference>
<dbReference type="RefSeq" id="NP_001190421.1">
    <property type="nucleotide sequence ID" value="NM_001203492.2"/>
</dbReference>
<dbReference type="RefSeq" id="NP_001331130.1">
    <property type="nucleotide sequence ID" value="NM_001344102.1"/>
</dbReference>
<dbReference type="RefSeq" id="NP_198383.1">
    <property type="nucleotide sequence ID" value="NM_122924.3"/>
</dbReference>
<dbReference type="RefSeq" id="NP_974850.1">
    <property type="nucleotide sequence ID" value="NM_203121.3"/>
</dbReference>
<dbReference type="SMR" id="Q8LA53"/>
<dbReference type="BioGRID" id="18742">
    <property type="interactions" value="29"/>
</dbReference>
<dbReference type="FunCoup" id="Q8LA53">
    <property type="interactions" value="1098"/>
</dbReference>
<dbReference type="IntAct" id="Q8LA53">
    <property type="interactions" value="28"/>
</dbReference>
<dbReference type="STRING" id="3702.Q8LA53"/>
<dbReference type="iPTMnet" id="Q8LA53"/>
<dbReference type="PaxDb" id="3702-AT5G35330.3"/>
<dbReference type="ProteomicsDB" id="238688"/>
<dbReference type="DNASU" id="833487"/>
<dbReference type="EnsemblPlants" id="AT5G35330.1">
    <property type="protein sequence ID" value="AT5G35330.1"/>
    <property type="gene ID" value="AT5G35330"/>
</dbReference>
<dbReference type="EnsemblPlants" id="AT5G35330.2">
    <property type="protein sequence ID" value="AT5G35330.2"/>
    <property type="gene ID" value="AT5G35330"/>
</dbReference>
<dbReference type="EnsemblPlants" id="AT5G35330.3">
    <property type="protein sequence ID" value="AT5G35330.3"/>
    <property type="gene ID" value="AT5G35330"/>
</dbReference>
<dbReference type="EnsemblPlants" id="AT5G35330.4">
    <property type="protein sequence ID" value="AT5G35330.4"/>
    <property type="gene ID" value="AT5G35330"/>
</dbReference>
<dbReference type="GeneID" id="833487"/>
<dbReference type="Gramene" id="AT5G35330.1">
    <property type="protein sequence ID" value="AT5G35330.1"/>
    <property type="gene ID" value="AT5G35330"/>
</dbReference>
<dbReference type="Gramene" id="AT5G35330.2">
    <property type="protein sequence ID" value="AT5G35330.2"/>
    <property type="gene ID" value="AT5G35330"/>
</dbReference>
<dbReference type="Gramene" id="AT5G35330.3">
    <property type="protein sequence ID" value="AT5G35330.3"/>
    <property type="gene ID" value="AT5G35330"/>
</dbReference>
<dbReference type="Gramene" id="AT5G35330.4">
    <property type="protein sequence ID" value="AT5G35330.4"/>
    <property type="gene ID" value="AT5G35330"/>
</dbReference>
<dbReference type="KEGG" id="ath:AT5G35330"/>
<dbReference type="Araport" id="AT5G35330"/>
<dbReference type="TAIR" id="AT5G35330">
    <property type="gene designation" value="MBD02"/>
</dbReference>
<dbReference type="eggNOG" id="KOG4161">
    <property type="taxonomic scope" value="Eukaryota"/>
</dbReference>
<dbReference type="HOGENOM" id="CLU_061068_0_0_1"/>
<dbReference type="InParanoid" id="Q8LA53"/>
<dbReference type="OMA" id="WKPDISC"/>
<dbReference type="PhylomeDB" id="Q8LA53"/>
<dbReference type="PRO" id="PR:Q8LA53"/>
<dbReference type="Proteomes" id="UP000006548">
    <property type="component" value="Chromosome 5"/>
</dbReference>
<dbReference type="ExpressionAtlas" id="Q8LA53">
    <property type="expression patterns" value="baseline and differential"/>
</dbReference>
<dbReference type="GO" id="GO:0000118">
    <property type="term" value="C:histone deacetylase complex"/>
    <property type="evidence" value="ECO:0000314"/>
    <property type="project" value="TAIR"/>
</dbReference>
<dbReference type="GO" id="GO:0005634">
    <property type="term" value="C:nucleus"/>
    <property type="evidence" value="ECO:0000314"/>
    <property type="project" value="UniProtKB"/>
</dbReference>
<dbReference type="GO" id="GO:0016581">
    <property type="term" value="C:NuRD complex"/>
    <property type="evidence" value="ECO:0000250"/>
    <property type="project" value="UniProtKB"/>
</dbReference>
<dbReference type="GO" id="GO:0003677">
    <property type="term" value="F:DNA binding"/>
    <property type="evidence" value="ECO:0007669"/>
    <property type="project" value="UniProtKB-KW"/>
</dbReference>
<dbReference type="GO" id="GO:0019899">
    <property type="term" value="F:enzyme binding"/>
    <property type="evidence" value="ECO:0000353"/>
    <property type="project" value="UniProtKB"/>
</dbReference>
<dbReference type="GO" id="GO:0008270">
    <property type="term" value="F:zinc ion binding"/>
    <property type="evidence" value="ECO:0007669"/>
    <property type="project" value="UniProtKB-KW"/>
</dbReference>
<dbReference type="GO" id="GO:0006338">
    <property type="term" value="P:chromatin remodeling"/>
    <property type="evidence" value="ECO:0000250"/>
    <property type="project" value="UniProtKB"/>
</dbReference>
<dbReference type="CDD" id="cd01396">
    <property type="entry name" value="MeCP2_MBD"/>
    <property type="match status" value="1"/>
</dbReference>
<dbReference type="FunFam" id="3.30.890.10:FF:000012">
    <property type="entry name" value="Methyl-CpG-binding domain-containing protein 1"/>
    <property type="match status" value="1"/>
</dbReference>
<dbReference type="FunFam" id="3.30.40.100:FF:000008">
    <property type="entry name" value="Methyl-CpG-binding domain-containing protein 2"/>
    <property type="match status" value="1"/>
</dbReference>
<dbReference type="Gene3D" id="3.30.40.100">
    <property type="match status" value="1"/>
</dbReference>
<dbReference type="Gene3D" id="3.30.890.10">
    <property type="entry name" value="Methyl-cpg-binding Protein 2, Chain A"/>
    <property type="match status" value="1"/>
</dbReference>
<dbReference type="InterPro" id="IPR016177">
    <property type="entry name" value="DNA-bd_dom_sf"/>
</dbReference>
<dbReference type="InterPro" id="IPR001739">
    <property type="entry name" value="Methyl_CpG_DNA-bd"/>
</dbReference>
<dbReference type="InterPro" id="IPR011124">
    <property type="entry name" value="Znf_CW"/>
</dbReference>
<dbReference type="PANTHER" id="PTHR12396:SF0">
    <property type="entry name" value="METHYL-CPG BINDING DOMAIN PROTEIN-LIKE, ISOFORM C"/>
    <property type="match status" value="1"/>
</dbReference>
<dbReference type="PANTHER" id="PTHR12396">
    <property type="entry name" value="METHYL-CPG BINDING PROTEIN, MBD"/>
    <property type="match status" value="1"/>
</dbReference>
<dbReference type="Pfam" id="PF01429">
    <property type="entry name" value="MBD"/>
    <property type="match status" value="1"/>
</dbReference>
<dbReference type="Pfam" id="PF07496">
    <property type="entry name" value="zf-CW"/>
    <property type="match status" value="1"/>
</dbReference>
<dbReference type="SMART" id="SM00391">
    <property type="entry name" value="MBD"/>
    <property type="match status" value="1"/>
</dbReference>
<dbReference type="SUPFAM" id="SSF54171">
    <property type="entry name" value="DNA-binding domain"/>
    <property type="match status" value="1"/>
</dbReference>
<dbReference type="PROSITE" id="PS50982">
    <property type="entry name" value="MBD"/>
    <property type="match status" value="1"/>
</dbReference>
<dbReference type="PROSITE" id="PS51050">
    <property type="entry name" value="ZF_CW"/>
    <property type="match status" value="1"/>
</dbReference>
<gene>
    <name type="primary">MBD2</name>
    <name type="ordered locus">At5g35330</name>
    <name type="ORF">T26D22.18</name>
</gene>
<name>MBD2_ARATH</name>
<reference key="1">
    <citation type="submission" date="1999-04" db="EMBL/GenBank/DDBJ databases">
        <title>Structural analysis of Arabidopsis thaliana chromosome 5. XI.</title>
        <authorList>
            <person name="Kaneko T."/>
            <person name="Katoh T."/>
            <person name="Asamizu E."/>
            <person name="Sato S."/>
            <person name="Nakamura Y."/>
            <person name="Kotani H."/>
            <person name="Tabata S."/>
        </authorList>
    </citation>
    <scope>NUCLEOTIDE SEQUENCE [LARGE SCALE GENOMIC DNA]</scope>
    <source>
        <strain>cv. Columbia</strain>
    </source>
</reference>
<reference key="2">
    <citation type="journal article" date="2000" name="Nature">
        <title>Sequence and analysis of chromosome 5 of the plant Arabidopsis thaliana.</title>
        <authorList>
            <person name="Tabata S."/>
            <person name="Kaneko T."/>
            <person name="Nakamura Y."/>
            <person name="Kotani H."/>
            <person name="Kato T."/>
            <person name="Asamizu E."/>
            <person name="Miyajima N."/>
            <person name="Sasamoto S."/>
            <person name="Kimura T."/>
            <person name="Hosouchi T."/>
            <person name="Kawashima K."/>
            <person name="Kohara M."/>
            <person name="Matsumoto M."/>
            <person name="Matsuno A."/>
            <person name="Muraki A."/>
            <person name="Nakayama S."/>
            <person name="Nakazaki N."/>
            <person name="Naruo K."/>
            <person name="Okumura S."/>
            <person name="Shinpo S."/>
            <person name="Takeuchi C."/>
            <person name="Wada T."/>
            <person name="Watanabe A."/>
            <person name="Yamada M."/>
            <person name="Yasuda M."/>
            <person name="Sato S."/>
            <person name="de la Bastide M."/>
            <person name="Huang E."/>
            <person name="Spiegel L."/>
            <person name="Gnoj L."/>
            <person name="O'Shaughnessy A."/>
            <person name="Preston R."/>
            <person name="Habermann K."/>
            <person name="Murray J."/>
            <person name="Johnson D."/>
            <person name="Rohlfing T."/>
            <person name="Nelson J."/>
            <person name="Stoneking T."/>
            <person name="Pepin K."/>
            <person name="Spieth J."/>
            <person name="Sekhon M."/>
            <person name="Armstrong J."/>
            <person name="Becker M."/>
            <person name="Belter E."/>
            <person name="Cordum H."/>
            <person name="Cordes M."/>
            <person name="Courtney L."/>
            <person name="Courtney W."/>
            <person name="Dante M."/>
            <person name="Du H."/>
            <person name="Edwards J."/>
            <person name="Fryman J."/>
            <person name="Haakensen B."/>
            <person name="Lamar E."/>
            <person name="Latreille P."/>
            <person name="Leonard S."/>
            <person name="Meyer R."/>
            <person name="Mulvaney E."/>
            <person name="Ozersky P."/>
            <person name="Riley A."/>
            <person name="Strowmatt C."/>
            <person name="Wagner-McPherson C."/>
            <person name="Wollam A."/>
            <person name="Yoakum M."/>
            <person name="Bell M."/>
            <person name="Dedhia N."/>
            <person name="Parnell L."/>
            <person name="Shah R."/>
            <person name="Rodriguez M."/>
            <person name="Hoon See L."/>
            <person name="Vil D."/>
            <person name="Baker J."/>
            <person name="Kirchoff K."/>
            <person name="Toth K."/>
            <person name="King L."/>
            <person name="Bahret A."/>
            <person name="Miller B."/>
            <person name="Marra M.A."/>
            <person name="Martienssen R."/>
            <person name="McCombie W.R."/>
            <person name="Wilson R.K."/>
            <person name="Murphy G."/>
            <person name="Bancroft I."/>
            <person name="Volckaert G."/>
            <person name="Wambutt R."/>
            <person name="Duesterhoeft A."/>
            <person name="Stiekema W."/>
            <person name="Pohl T."/>
            <person name="Entian K.-D."/>
            <person name="Terryn N."/>
            <person name="Hartley N."/>
            <person name="Bent E."/>
            <person name="Johnson S."/>
            <person name="Langham S.-A."/>
            <person name="McCullagh B."/>
            <person name="Robben J."/>
            <person name="Grymonprez B."/>
            <person name="Zimmermann W."/>
            <person name="Ramsperger U."/>
            <person name="Wedler H."/>
            <person name="Balke K."/>
            <person name="Wedler E."/>
            <person name="Peters S."/>
            <person name="van Staveren M."/>
            <person name="Dirkse W."/>
            <person name="Mooijman P."/>
            <person name="Klein Lankhorst R."/>
            <person name="Weitzenegger T."/>
            <person name="Bothe G."/>
            <person name="Rose M."/>
            <person name="Hauf J."/>
            <person name="Berneiser S."/>
            <person name="Hempel S."/>
            <person name="Feldpausch M."/>
            <person name="Lamberth S."/>
            <person name="Villarroel R."/>
            <person name="Gielen J."/>
            <person name="Ardiles W."/>
            <person name="Bents O."/>
            <person name="Lemcke K."/>
            <person name="Kolesov G."/>
            <person name="Mayer K.F.X."/>
            <person name="Rudd S."/>
            <person name="Schoof H."/>
            <person name="Schueller C."/>
            <person name="Zaccaria P."/>
            <person name="Mewes H.-W."/>
            <person name="Bevan M."/>
            <person name="Fransz P.F."/>
        </authorList>
    </citation>
    <scope>NUCLEOTIDE SEQUENCE [LARGE SCALE GENOMIC DNA]</scope>
    <source>
        <strain>cv. Columbia</strain>
    </source>
</reference>
<reference key="3">
    <citation type="journal article" date="2017" name="Plant J.">
        <title>Araport11: a complete reannotation of the Arabidopsis thaliana reference genome.</title>
        <authorList>
            <person name="Cheng C.Y."/>
            <person name="Krishnakumar V."/>
            <person name="Chan A.P."/>
            <person name="Thibaud-Nissen F."/>
            <person name="Schobel S."/>
            <person name="Town C.D."/>
        </authorList>
    </citation>
    <scope>GENOME REANNOTATION</scope>
    <source>
        <strain>cv. Columbia</strain>
    </source>
</reference>
<reference key="4">
    <citation type="submission" date="2002-03" db="EMBL/GenBank/DDBJ databases">
        <title>Full-length cDNA from Arabidopsis thaliana.</title>
        <authorList>
            <person name="Brover V.V."/>
            <person name="Troukhan M.E."/>
            <person name="Alexandrov N.A."/>
            <person name="Lu Y.-P."/>
            <person name="Flavell R.B."/>
            <person name="Feldmann K.A."/>
        </authorList>
    </citation>
    <scope>NUCLEOTIDE SEQUENCE [LARGE SCALE MRNA]</scope>
    <source>
        <strain>cv. Columbia</strain>
    </source>
</reference>
<reference key="5">
    <citation type="submission" date="2006-06" db="EMBL/GenBank/DDBJ databases">
        <title>Arabidopsis ORF clones.</title>
        <authorList>
            <person name="Kim C.J."/>
            <person name="Chen H."/>
            <person name="Quinitio C."/>
            <person name="Shinn P."/>
            <person name="Ecker J.R."/>
        </authorList>
    </citation>
    <scope>NUCLEOTIDE SEQUENCE [LARGE SCALE MRNA]</scope>
    <source>
        <strain>cv. Columbia</strain>
    </source>
</reference>
<reference key="6">
    <citation type="journal article" date="2003" name="Science">
        <title>Empirical analysis of transcriptional activity in the Arabidopsis genome.</title>
        <authorList>
            <person name="Yamada K."/>
            <person name="Lim J."/>
            <person name="Dale J.M."/>
            <person name="Chen H."/>
            <person name="Shinn P."/>
            <person name="Palm C.J."/>
            <person name="Southwick A.M."/>
            <person name="Wu H.C."/>
            <person name="Kim C.J."/>
            <person name="Nguyen M."/>
            <person name="Pham P.K."/>
            <person name="Cheuk R.F."/>
            <person name="Karlin-Newmann G."/>
            <person name="Liu S.X."/>
            <person name="Lam B."/>
            <person name="Sakano H."/>
            <person name="Wu T."/>
            <person name="Yu G."/>
            <person name="Miranda M."/>
            <person name="Quach H.L."/>
            <person name="Tripp M."/>
            <person name="Chang C.H."/>
            <person name="Lee J.M."/>
            <person name="Toriumi M.J."/>
            <person name="Chan M.M."/>
            <person name="Tang C.C."/>
            <person name="Onodera C.S."/>
            <person name="Deng J.M."/>
            <person name="Akiyama K."/>
            <person name="Ansari Y."/>
            <person name="Arakawa T."/>
            <person name="Banh J."/>
            <person name="Banno F."/>
            <person name="Bowser L."/>
            <person name="Brooks S.Y."/>
            <person name="Carninci P."/>
            <person name="Chao Q."/>
            <person name="Choy N."/>
            <person name="Enju A."/>
            <person name="Goldsmith A.D."/>
            <person name="Gurjal M."/>
            <person name="Hansen N.F."/>
            <person name="Hayashizaki Y."/>
            <person name="Johnson-Hopson C."/>
            <person name="Hsuan V.W."/>
            <person name="Iida K."/>
            <person name="Karnes M."/>
            <person name="Khan S."/>
            <person name="Koesema E."/>
            <person name="Ishida J."/>
            <person name="Jiang P.X."/>
            <person name="Jones T."/>
            <person name="Kawai J."/>
            <person name="Kamiya A."/>
            <person name="Meyers C."/>
            <person name="Nakajima M."/>
            <person name="Narusaka M."/>
            <person name="Seki M."/>
            <person name="Sakurai T."/>
            <person name="Satou M."/>
            <person name="Tamse R."/>
            <person name="Vaysberg M."/>
            <person name="Wallender E.K."/>
            <person name="Wong C."/>
            <person name="Yamamura Y."/>
            <person name="Yuan S."/>
            <person name="Shinozaki K."/>
            <person name="Davis R.W."/>
            <person name="Theologis A."/>
            <person name="Ecker J.R."/>
        </authorList>
    </citation>
    <scope>NUCLEOTIDE SEQUENCE [LARGE SCALE MRNA] OF 1-257</scope>
    <source>
        <strain>cv. Columbia</strain>
    </source>
</reference>
<reference key="7">
    <citation type="submission" date="2006-07" db="EMBL/GenBank/DDBJ databases">
        <title>Large-scale analysis of RIKEN Arabidopsis full-length (RAFL) cDNAs.</title>
        <authorList>
            <person name="Totoki Y."/>
            <person name="Seki M."/>
            <person name="Ishida J."/>
            <person name="Nakajima M."/>
            <person name="Enju A."/>
            <person name="Kamiya A."/>
            <person name="Narusaka M."/>
            <person name="Shin-i T."/>
            <person name="Nakagawa M."/>
            <person name="Sakamoto N."/>
            <person name="Oishi K."/>
            <person name="Kohara Y."/>
            <person name="Kobayashi M."/>
            <person name="Toyoda A."/>
            <person name="Sakaki Y."/>
            <person name="Sakurai T."/>
            <person name="Iida K."/>
            <person name="Akiyama K."/>
            <person name="Satou M."/>
            <person name="Toyoda T."/>
            <person name="Konagaya A."/>
            <person name="Carninci P."/>
            <person name="Kawai J."/>
            <person name="Hayashizaki Y."/>
            <person name="Shinozaki K."/>
        </authorList>
    </citation>
    <scope>NUCLEOTIDE SEQUENCE [LARGE SCALE MRNA] OF 1-252</scope>
    <source>
        <strain>cv. Columbia</strain>
    </source>
</reference>
<reference key="8">
    <citation type="journal article" date="2003" name="Nucleic Acids Res.">
        <title>Ten members of the Arabidopsis gene family encoding methyl-CpG-binding domain proteins are transcriptionally active and at least one, AtMBD11, is crucial for normal development.</title>
        <authorList>
            <person name="Berg A."/>
            <person name="Meza T.J."/>
            <person name="Mahic M."/>
            <person name="Thorstensen T."/>
            <person name="Kristiansen K."/>
            <person name="Aalen R.B."/>
        </authorList>
    </citation>
    <scope>MAD MOTIF</scope>
    <scope>TISSUE SPECIFICITY</scope>
    <scope>GENE FAMILY</scope>
    <scope>NOMENCLATURE</scope>
</reference>
<reference key="9">
    <citation type="journal article" date="2003" name="Plant Mol. Biol.">
        <title>Arabidopsis MBD proteins show different binding specificities and nuclear localization.</title>
        <authorList>
            <person name="Scebba F."/>
            <person name="Bernacchia G."/>
            <person name="De Bastiani M."/>
            <person name="Evangelista M."/>
            <person name="Cantoni R.M."/>
            <person name="Cella R."/>
            <person name="Locci M.T."/>
            <person name="Pitto L."/>
        </authorList>
    </citation>
    <scope>TISSUE SPECIFICITY</scope>
    <source>
        <strain>cv. Columbia</strain>
    </source>
</reference>
<reference key="10">
    <citation type="journal article" date="2003" name="Plant Physiol.">
        <title>Methylated DNA-binding proteins from Arabidopsis.</title>
        <authorList>
            <person name="Ito M."/>
            <person name="Koike A."/>
            <person name="Koizumi N."/>
            <person name="Sano H."/>
        </authorList>
    </citation>
    <scope>SUBCELLULAR LOCATION</scope>
</reference>
<reference key="11">
    <citation type="journal article" date="2005" name="Plant Cell">
        <title>DDM1 binds Arabidopsis methyl-CpG binding domain proteins and affects their subnuclear localization.</title>
        <authorList>
            <person name="Zemach A."/>
            <person name="Li Y."/>
            <person name="Wayburn B."/>
            <person name="Ben-Meir H."/>
            <person name="Kiss V."/>
            <person name="Avivi Y."/>
            <person name="Kalchenko V."/>
            <person name="Jacobsen S.E."/>
            <person name="Grafi G."/>
        </authorList>
    </citation>
    <scope>SUBCELLULAR LOCATION</scope>
    <scope>INTERACTION WITH DDM1</scope>
</reference>
<reference key="12">
    <citation type="journal article" date="2005" name="Plant Physiol.">
        <title>Evolutionary divergence of monocot and dicot methyl-CpG-binding domain proteins.</title>
        <authorList>
            <person name="Springer N.M."/>
            <person name="Kaeppler S.M."/>
        </authorList>
    </citation>
    <scope>GENE FAMILY</scope>
</reference>
<reference key="13">
    <citation type="journal article" date="2007" name="Trends Plant Sci.">
        <title>Methyl-CpG-binding domain proteins in plants: interpreters of DNA methylation.</title>
        <authorList>
            <person name="Zemach A."/>
            <person name="Grafi G."/>
        </authorList>
    </citation>
    <scope>REVIEW</scope>
</reference>
<reference key="14">
    <citation type="journal article" date="2009" name="Plant Physiol.">
        <title>Large-scale Arabidopsis phosphoproteome profiling reveals novel chloroplast kinase substrates and phosphorylation networks.</title>
        <authorList>
            <person name="Reiland S."/>
            <person name="Messerli G."/>
            <person name="Baerenfaller K."/>
            <person name="Gerrits B."/>
            <person name="Endler A."/>
            <person name="Grossmann J."/>
            <person name="Gruissem W."/>
            <person name="Baginsky S."/>
        </authorList>
    </citation>
    <scope>IDENTIFICATION BY MASS SPECTROMETRY [LARGE SCALE ANALYSIS]</scope>
</reference>